<accession>B4SXW1</accession>
<proteinExistence type="inferred from homology"/>
<evidence type="ECO:0000255" key="1">
    <source>
        <dbReference type="HAMAP-Rule" id="MF_01424"/>
    </source>
</evidence>
<name>MDTC_SALNS</name>
<reference key="1">
    <citation type="journal article" date="2011" name="J. Bacteriol.">
        <title>Comparative genomics of 28 Salmonella enterica isolates: evidence for CRISPR-mediated adaptive sublineage evolution.</title>
        <authorList>
            <person name="Fricke W.F."/>
            <person name="Mammel M.K."/>
            <person name="McDermott P.F."/>
            <person name="Tartera C."/>
            <person name="White D.G."/>
            <person name="Leclerc J.E."/>
            <person name="Ravel J."/>
            <person name="Cebula T.A."/>
        </authorList>
    </citation>
    <scope>NUCLEOTIDE SEQUENCE [LARGE SCALE GENOMIC DNA]</scope>
    <source>
        <strain>SL254</strain>
    </source>
</reference>
<sequence length="1026" mass="110995">MRFFALFIYRPVATILIAAAITLCGILGFRLLPVAPLPQVDFPVIMVSASLPGASPETMASSVATPLERSLGRIAGVNEMTSSSSLGSTRIILEFNFDRDINGAARDVQAAINAAQSLLPSGMPSRPTYRKANPSDAPIMILTLTSESWSQGKLYDFASTQLAQTIAQIDGVGDVDVGGSSLPAVRVGLNPQALFNQGVSLDEVREAIDSANVRRPQGAIEDSVHRWQIQTNDELKTAAEYQPLIIHYNNGAAVRLGDVASVTDSVQDVRNAGMTNAKPAILLMIRKLPEANIIQTVDGIRAKLPELRAMIPAAIDLQIAQDRSPTIRASLQEVEETLAISVALVILVVFLFLRSGRATLIPAVAVPVSLIGTFAAMYLCGFSLNNLSLMALTIATGFVVDDAIVVLENIARHLEAGMKPLQAALQGTREVGFTVISMSLSLVAVFLPLLLMGGLPGRLLREFAVTLSVAIGISLVVSLTLTPMMCGWMLKSSKPRTQPRKRGVGRLLVALQQGYGTSLKWVLNHTRLVGVVFLGTVALNIWLYIAIPKTFFPEQDTGVLMGGIQADQSISFQAMRGKLQDFMKIIRDDPAVNNVTGFTGGSRVNSGMMFITLKPRGERKETAQQIIDRLRVKLAKEPGARLFLMAVQDIRVGGRQANASYQYTLLSDSLAALREWEPKIRKALSALPQLADVNSDQQDNGAEMNLIYDRDTMSRLGIDVQAANSLLNNAFGQRQISTIYQPMNQYKVVMEVDPRYSQDISALEKMFVINRDGKAIPLSYFAQWRPANAPLSVNHQGLSAASTIAFNLPTGTSLSQATEAINRTMTQLGVPSTVRGSFSGTAQVFQQTMNSQLILIVAAIATVYIVLGILYESYVHPLTILSTLPSAGVGALLALELFNAPFSLIALIGIMLLIGIVKKNAIMMVDFALEAQRSGGLTPEQAIFQACLLRFRPIMMTTLAALFGALPLVLSGGDGSELRQPLGITIVGGLVMSQLLTLYTTPVVYLFFDRLRLRFSRKNSKPVVEI</sequence>
<dbReference type="EMBL" id="CP001113">
    <property type="protein sequence ID" value="ACF61374.1"/>
    <property type="molecule type" value="Genomic_DNA"/>
</dbReference>
<dbReference type="RefSeq" id="WP_001210108.1">
    <property type="nucleotide sequence ID" value="NZ_CCMR01000002.1"/>
</dbReference>
<dbReference type="SMR" id="B4SXW1"/>
<dbReference type="KEGG" id="see:SNSL254_A2314"/>
<dbReference type="HOGENOM" id="CLU_002755_1_2_6"/>
<dbReference type="Proteomes" id="UP000008824">
    <property type="component" value="Chromosome"/>
</dbReference>
<dbReference type="GO" id="GO:0005886">
    <property type="term" value="C:plasma membrane"/>
    <property type="evidence" value="ECO:0007669"/>
    <property type="project" value="UniProtKB-SubCell"/>
</dbReference>
<dbReference type="GO" id="GO:0042910">
    <property type="term" value="F:xenobiotic transmembrane transporter activity"/>
    <property type="evidence" value="ECO:0007669"/>
    <property type="project" value="TreeGrafter"/>
</dbReference>
<dbReference type="FunFam" id="1.20.1640.10:FF:000001">
    <property type="entry name" value="Efflux pump membrane transporter"/>
    <property type="match status" value="1"/>
</dbReference>
<dbReference type="FunFam" id="3.30.70.1430:FF:000001">
    <property type="entry name" value="Efflux pump membrane transporter"/>
    <property type="match status" value="1"/>
</dbReference>
<dbReference type="FunFam" id="3.30.2090.10:FF:000004">
    <property type="entry name" value="Multidrug resistance protein MdtC"/>
    <property type="match status" value="1"/>
</dbReference>
<dbReference type="FunFam" id="3.30.2090.10:FF:000005">
    <property type="entry name" value="Multidrug resistance protein MdtC"/>
    <property type="match status" value="1"/>
</dbReference>
<dbReference type="FunFam" id="3.30.70.1430:FF:000004">
    <property type="entry name" value="Multidrug resistance protein MdtC"/>
    <property type="match status" value="1"/>
</dbReference>
<dbReference type="Gene3D" id="3.30.70.1430">
    <property type="entry name" value="Multidrug efflux transporter AcrB pore domain"/>
    <property type="match status" value="2"/>
</dbReference>
<dbReference type="Gene3D" id="3.30.70.1440">
    <property type="entry name" value="Multidrug efflux transporter AcrB pore domain"/>
    <property type="match status" value="1"/>
</dbReference>
<dbReference type="Gene3D" id="3.30.70.1320">
    <property type="entry name" value="Multidrug efflux transporter AcrB pore domain like"/>
    <property type="match status" value="1"/>
</dbReference>
<dbReference type="Gene3D" id="3.30.2090.10">
    <property type="entry name" value="Multidrug efflux transporter AcrB TolC docking domain, DN and DC subdomains"/>
    <property type="match status" value="2"/>
</dbReference>
<dbReference type="Gene3D" id="1.20.1640.10">
    <property type="entry name" value="Multidrug efflux transporter AcrB transmembrane domain"/>
    <property type="match status" value="2"/>
</dbReference>
<dbReference type="HAMAP" id="MF_01424">
    <property type="entry name" value="MdtC"/>
    <property type="match status" value="1"/>
</dbReference>
<dbReference type="InterPro" id="IPR027463">
    <property type="entry name" value="AcrB_DN_DC_subdom"/>
</dbReference>
<dbReference type="InterPro" id="IPR001036">
    <property type="entry name" value="Acrflvin-R"/>
</dbReference>
<dbReference type="InterPro" id="IPR023931">
    <property type="entry name" value="Multidrug-R_MdtC"/>
</dbReference>
<dbReference type="NCBIfam" id="NF007905">
    <property type="entry name" value="PRK10614.1"/>
    <property type="match status" value="1"/>
</dbReference>
<dbReference type="NCBIfam" id="NF033617">
    <property type="entry name" value="RND_permease_2"/>
    <property type="match status" value="1"/>
</dbReference>
<dbReference type="PANTHER" id="PTHR32063">
    <property type="match status" value="1"/>
</dbReference>
<dbReference type="PANTHER" id="PTHR32063:SF34">
    <property type="entry name" value="MULTIDRUG RESISTANCE PROTEIN MDTC"/>
    <property type="match status" value="1"/>
</dbReference>
<dbReference type="Pfam" id="PF00873">
    <property type="entry name" value="ACR_tran"/>
    <property type="match status" value="1"/>
</dbReference>
<dbReference type="PRINTS" id="PR00702">
    <property type="entry name" value="ACRIFLAVINRP"/>
</dbReference>
<dbReference type="SUPFAM" id="SSF82693">
    <property type="entry name" value="Multidrug efflux transporter AcrB pore domain, PN1, PN2, PC1 and PC2 subdomains"/>
    <property type="match status" value="4"/>
</dbReference>
<dbReference type="SUPFAM" id="SSF82714">
    <property type="entry name" value="Multidrug efflux transporter AcrB TolC docking domain, DN and DC subdomains"/>
    <property type="match status" value="2"/>
</dbReference>
<dbReference type="SUPFAM" id="SSF82866">
    <property type="entry name" value="Multidrug efflux transporter AcrB transmembrane domain"/>
    <property type="match status" value="2"/>
</dbReference>
<feature type="chain" id="PRO_1000145682" description="Multidrug resistance protein MdtC">
    <location>
        <begin position="1"/>
        <end position="1026"/>
    </location>
</feature>
<feature type="transmembrane region" description="Helical" evidence="1">
    <location>
        <begin position="15"/>
        <end position="35"/>
    </location>
</feature>
<feature type="transmembrane region" description="Helical" evidence="1">
    <location>
        <begin position="333"/>
        <end position="353"/>
    </location>
</feature>
<feature type="transmembrane region" description="Helical" evidence="1">
    <location>
        <begin position="360"/>
        <end position="380"/>
    </location>
</feature>
<feature type="transmembrane region" description="Helical" evidence="1">
    <location>
        <begin position="387"/>
        <end position="407"/>
    </location>
</feature>
<feature type="transmembrane region" description="Helical" evidence="1">
    <location>
        <begin position="431"/>
        <end position="451"/>
    </location>
</feature>
<feature type="transmembrane region" description="Helical" evidence="1">
    <location>
        <begin position="463"/>
        <end position="483"/>
    </location>
</feature>
<feature type="transmembrane region" description="Helical" evidence="1">
    <location>
        <begin position="528"/>
        <end position="548"/>
    </location>
</feature>
<feature type="transmembrane region" description="Helical" evidence="1">
    <location>
        <begin position="853"/>
        <end position="873"/>
    </location>
</feature>
<feature type="transmembrane region" description="Helical" evidence="1">
    <location>
        <begin position="897"/>
        <end position="917"/>
    </location>
</feature>
<feature type="transmembrane region" description="Helical" evidence="1">
    <location>
        <begin position="953"/>
        <end position="973"/>
    </location>
</feature>
<feature type="transmembrane region" description="Helical" evidence="1">
    <location>
        <begin position="984"/>
        <end position="1004"/>
    </location>
</feature>
<keyword id="KW-0997">Cell inner membrane</keyword>
<keyword id="KW-1003">Cell membrane</keyword>
<keyword id="KW-0472">Membrane</keyword>
<keyword id="KW-0812">Transmembrane</keyword>
<keyword id="KW-1133">Transmembrane helix</keyword>
<keyword id="KW-0813">Transport</keyword>
<gene>
    <name evidence="1" type="primary">mdtC</name>
    <name type="ordered locus">SNSL254_A2314</name>
</gene>
<organism>
    <name type="scientific">Salmonella newport (strain SL254)</name>
    <dbReference type="NCBI Taxonomy" id="423368"/>
    <lineage>
        <taxon>Bacteria</taxon>
        <taxon>Pseudomonadati</taxon>
        <taxon>Pseudomonadota</taxon>
        <taxon>Gammaproteobacteria</taxon>
        <taxon>Enterobacterales</taxon>
        <taxon>Enterobacteriaceae</taxon>
        <taxon>Salmonella</taxon>
    </lineage>
</organism>
<comment type="subunit">
    <text evidence="1">Part of a tripartite efflux system composed of MdtA, MdtB and MdtC. MdtC forms a heteromultimer with MdtB.</text>
</comment>
<comment type="subcellular location">
    <subcellularLocation>
        <location evidence="1">Cell inner membrane</location>
        <topology evidence="1">Multi-pass membrane protein</topology>
    </subcellularLocation>
</comment>
<comment type="similarity">
    <text evidence="1">Belongs to the resistance-nodulation-cell division (RND) (TC 2.A.6) family. MdtC subfamily.</text>
</comment>
<protein>
    <recommendedName>
        <fullName evidence="1">Multidrug resistance protein MdtC</fullName>
    </recommendedName>
    <alternativeName>
        <fullName evidence="1">Multidrug transporter MdtC</fullName>
    </alternativeName>
</protein>